<sequence length="308" mass="34310">MSAQKPGLHPRNRHQHRYDLAALCQTTPELTSFLIRTPAGEQSVDFANPQAVKALNKALLAHFYAVTHWDIPPGFLCPPVPGRADYIHHLADLLGETTGSIPAQATILDVGVGANCIYPLIGVHEYGWRFTGSEVSDAAMSSAQAIIQANTGLSRAIRLRRQKDPAAIFTGIIHKNEFYDATLCNPPFHDSAAAARAGSERKRRNLGQNKDDALNFGGQQQELWCEGGEVAFIKKMIAESQSFRRQVLWFTTLVSRGENLPPLYRALTEAGAVKVVKKEMAQGQKQSRFIAWTFMDDDQRRRFITRKR</sequence>
<protein>
    <recommendedName>
        <fullName evidence="1">Ribosomal RNA large subunit methyltransferase F</fullName>
        <ecNumber evidence="1">2.1.1.181</ecNumber>
    </recommendedName>
    <alternativeName>
        <fullName evidence="1">23S rRNA mA1618 methyltransferase</fullName>
    </alternativeName>
    <alternativeName>
        <fullName evidence="1">rRNA adenine N-6-methyltransferase</fullName>
    </alternativeName>
</protein>
<keyword id="KW-0963">Cytoplasm</keyword>
<keyword id="KW-0489">Methyltransferase</keyword>
<keyword id="KW-0698">rRNA processing</keyword>
<keyword id="KW-0949">S-adenosyl-L-methionine</keyword>
<keyword id="KW-0808">Transferase</keyword>
<gene>
    <name evidence="1" type="primary">rlmF</name>
    <name type="ordered locus">SEN0771</name>
</gene>
<accession>B5QXT1</accession>
<feature type="chain" id="PRO_1000188530" description="Ribosomal RNA large subunit methyltransferase F">
    <location>
        <begin position="1"/>
        <end position="308"/>
    </location>
</feature>
<dbReference type="EC" id="2.1.1.181" evidence="1"/>
<dbReference type="EMBL" id="AM933172">
    <property type="protein sequence ID" value="CAR32356.1"/>
    <property type="molecule type" value="Genomic_DNA"/>
</dbReference>
<dbReference type="RefSeq" id="WP_001275962.1">
    <property type="nucleotide sequence ID" value="NC_011294.1"/>
</dbReference>
<dbReference type="SMR" id="B5QXT1"/>
<dbReference type="KEGG" id="set:SEN0771"/>
<dbReference type="HOGENOM" id="CLU_027534_3_0_6"/>
<dbReference type="Proteomes" id="UP000000613">
    <property type="component" value="Chromosome"/>
</dbReference>
<dbReference type="GO" id="GO:0005737">
    <property type="term" value="C:cytoplasm"/>
    <property type="evidence" value="ECO:0007669"/>
    <property type="project" value="UniProtKB-SubCell"/>
</dbReference>
<dbReference type="GO" id="GO:0052907">
    <property type="term" value="F:23S rRNA (adenine(1618)-N(6))-methyltransferase activity"/>
    <property type="evidence" value="ECO:0007669"/>
    <property type="project" value="UniProtKB-EC"/>
</dbReference>
<dbReference type="GO" id="GO:0070475">
    <property type="term" value="P:rRNA base methylation"/>
    <property type="evidence" value="ECO:0007669"/>
    <property type="project" value="TreeGrafter"/>
</dbReference>
<dbReference type="FunFam" id="3.40.50.150:FF:000045">
    <property type="entry name" value="Ribosomal RNA large subunit methyltransferase F"/>
    <property type="match status" value="1"/>
</dbReference>
<dbReference type="Gene3D" id="3.40.50.150">
    <property type="entry name" value="Vaccinia Virus protein VP39"/>
    <property type="match status" value="1"/>
</dbReference>
<dbReference type="HAMAP" id="MF_01848">
    <property type="entry name" value="23SrRNA_methyltr_F"/>
    <property type="match status" value="1"/>
</dbReference>
<dbReference type="InterPro" id="IPR010286">
    <property type="entry name" value="METTL16/RlmF"/>
</dbReference>
<dbReference type="InterPro" id="IPR016909">
    <property type="entry name" value="rRNA_lsu_MeTfrase_F"/>
</dbReference>
<dbReference type="InterPro" id="IPR029063">
    <property type="entry name" value="SAM-dependent_MTases_sf"/>
</dbReference>
<dbReference type="NCBIfam" id="NF008725">
    <property type="entry name" value="PRK11727.1"/>
    <property type="match status" value="1"/>
</dbReference>
<dbReference type="PANTHER" id="PTHR13393:SF0">
    <property type="entry name" value="RNA N6-ADENOSINE-METHYLTRANSFERASE METTL16"/>
    <property type="match status" value="1"/>
</dbReference>
<dbReference type="PANTHER" id="PTHR13393">
    <property type="entry name" value="SAM-DEPENDENT METHYLTRANSFERASE"/>
    <property type="match status" value="1"/>
</dbReference>
<dbReference type="Pfam" id="PF05971">
    <property type="entry name" value="Methyltransf_10"/>
    <property type="match status" value="1"/>
</dbReference>
<dbReference type="PIRSF" id="PIRSF029038">
    <property type="entry name" value="Mtase_YbiN_prd"/>
    <property type="match status" value="1"/>
</dbReference>
<dbReference type="SUPFAM" id="SSF53335">
    <property type="entry name" value="S-adenosyl-L-methionine-dependent methyltransferases"/>
    <property type="match status" value="1"/>
</dbReference>
<comment type="function">
    <text evidence="1">Specifically methylates the adenine in position 1618 of 23S rRNA.</text>
</comment>
<comment type="catalytic activity">
    <reaction evidence="1">
        <text>adenosine(1618) in 23S rRNA + S-adenosyl-L-methionine = N(6)-methyladenosine(1618) in 23S rRNA + S-adenosyl-L-homocysteine + H(+)</text>
        <dbReference type="Rhea" id="RHEA:16497"/>
        <dbReference type="Rhea" id="RHEA-COMP:10229"/>
        <dbReference type="Rhea" id="RHEA-COMP:10231"/>
        <dbReference type="ChEBI" id="CHEBI:15378"/>
        <dbReference type="ChEBI" id="CHEBI:57856"/>
        <dbReference type="ChEBI" id="CHEBI:59789"/>
        <dbReference type="ChEBI" id="CHEBI:74411"/>
        <dbReference type="ChEBI" id="CHEBI:74449"/>
        <dbReference type="EC" id="2.1.1.181"/>
    </reaction>
</comment>
<comment type="subcellular location">
    <subcellularLocation>
        <location evidence="1">Cytoplasm</location>
    </subcellularLocation>
</comment>
<comment type="similarity">
    <text evidence="1">Belongs to the methyltransferase superfamily. METTL16/RlmF family.</text>
</comment>
<reference key="1">
    <citation type="journal article" date="2008" name="Genome Res.">
        <title>Comparative genome analysis of Salmonella enteritidis PT4 and Salmonella gallinarum 287/91 provides insights into evolutionary and host adaptation pathways.</title>
        <authorList>
            <person name="Thomson N.R."/>
            <person name="Clayton D.J."/>
            <person name="Windhorst D."/>
            <person name="Vernikos G."/>
            <person name="Davidson S."/>
            <person name="Churcher C."/>
            <person name="Quail M.A."/>
            <person name="Stevens M."/>
            <person name="Jones M.A."/>
            <person name="Watson M."/>
            <person name="Barron A."/>
            <person name="Layton A."/>
            <person name="Pickard D."/>
            <person name="Kingsley R.A."/>
            <person name="Bignell A."/>
            <person name="Clark L."/>
            <person name="Harris B."/>
            <person name="Ormond D."/>
            <person name="Abdellah Z."/>
            <person name="Brooks K."/>
            <person name="Cherevach I."/>
            <person name="Chillingworth T."/>
            <person name="Woodward J."/>
            <person name="Norberczak H."/>
            <person name="Lord A."/>
            <person name="Arrowsmith C."/>
            <person name="Jagels K."/>
            <person name="Moule S."/>
            <person name="Mungall K."/>
            <person name="Saunders M."/>
            <person name="Whitehead S."/>
            <person name="Chabalgoity J.A."/>
            <person name="Maskell D."/>
            <person name="Humphreys T."/>
            <person name="Roberts M."/>
            <person name="Barrow P.A."/>
            <person name="Dougan G."/>
            <person name="Parkhill J."/>
        </authorList>
    </citation>
    <scope>NUCLEOTIDE SEQUENCE [LARGE SCALE GENOMIC DNA]</scope>
    <source>
        <strain>P125109</strain>
    </source>
</reference>
<evidence type="ECO:0000255" key="1">
    <source>
        <dbReference type="HAMAP-Rule" id="MF_01848"/>
    </source>
</evidence>
<proteinExistence type="inferred from homology"/>
<organism>
    <name type="scientific">Salmonella enteritidis PT4 (strain P125109)</name>
    <dbReference type="NCBI Taxonomy" id="550537"/>
    <lineage>
        <taxon>Bacteria</taxon>
        <taxon>Pseudomonadati</taxon>
        <taxon>Pseudomonadota</taxon>
        <taxon>Gammaproteobacteria</taxon>
        <taxon>Enterobacterales</taxon>
        <taxon>Enterobacteriaceae</taxon>
        <taxon>Salmonella</taxon>
    </lineage>
</organism>
<name>RLMF_SALEP</name>